<organism>
    <name type="scientific">Streptococcus pyogenes serotype M49 (strain NZ131)</name>
    <dbReference type="NCBI Taxonomy" id="471876"/>
    <lineage>
        <taxon>Bacteria</taxon>
        <taxon>Bacillati</taxon>
        <taxon>Bacillota</taxon>
        <taxon>Bacilli</taxon>
        <taxon>Lactobacillales</taxon>
        <taxon>Streptococcaceae</taxon>
        <taxon>Streptococcus</taxon>
    </lineage>
</organism>
<name>SYR_STRPZ</name>
<keyword id="KW-0030">Aminoacyl-tRNA synthetase</keyword>
<keyword id="KW-0067">ATP-binding</keyword>
<keyword id="KW-0963">Cytoplasm</keyword>
<keyword id="KW-0436">Ligase</keyword>
<keyword id="KW-0547">Nucleotide-binding</keyword>
<keyword id="KW-0648">Protein biosynthesis</keyword>
<accession>B5XJ77</accession>
<protein>
    <recommendedName>
        <fullName evidence="1">Arginine--tRNA ligase</fullName>
        <ecNumber evidence="1">6.1.1.19</ecNumber>
    </recommendedName>
    <alternativeName>
        <fullName evidence="1">Arginyl-tRNA synthetase</fullName>
        <shortName evidence="1">ArgRS</shortName>
    </alternativeName>
</protein>
<proteinExistence type="inferred from homology"/>
<comment type="catalytic activity">
    <reaction evidence="1">
        <text>tRNA(Arg) + L-arginine + ATP = L-arginyl-tRNA(Arg) + AMP + diphosphate</text>
        <dbReference type="Rhea" id="RHEA:20301"/>
        <dbReference type="Rhea" id="RHEA-COMP:9658"/>
        <dbReference type="Rhea" id="RHEA-COMP:9673"/>
        <dbReference type="ChEBI" id="CHEBI:30616"/>
        <dbReference type="ChEBI" id="CHEBI:32682"/>
        <dbReference type="ChEBI" id="CHEBI:33019"/>
        <dbReference type="ChEBI" id="CHEBI:78442"/>
        <dbReference type="ChEBI" id="CHEBI:78513"/>
        <dbReference type="ChEBI" id="CHEBI:456215"/>
        <dbReference type="EC" id="6.1.1.19"/>
    </reaction>
</comment>
<comment type="subunit">
    <text evidence="1">Monomer.</text>
</comment>
<comment type="subcellular location">
    <subcellularLocation>
        <location evidence="1">Cytoplasm</location>
    </subcellularLocation>
</comment>
<comment type="similarity">
    <text evidence="1">Belongs to the class-I aminoacyl-tRNA synthetase family.</text>
</comment>
<dbReference type="EC" id="6.1.1.19" evidence="1"/>
<dbReference type="EMBL" id="CP000829">
    <property type="protein sequence ID" value="ACI62011.1"/>
    <property type="molecule type" value="Genomic_DNA"/>
</dbReference>
<dbReference type="SMR" id="B5XJ77"/>
<dbReference type="KEGG" id="soz:Spy49_1762"/>
<dbReference type="HOGENOM" id="CLU_006406_6_1_9"/>
<dbReference type="Proteomes" id="UP000001039">
    <property type="component" value="Chromosome"/>
</dbReference>
<dbReference type="GO" id="GO:0005737">
    <property type="term" value="C:cytoplasm"/>
    <property type="evidence" value="ECO:0007669"/>
    <property type="project" value="UniProtKB-SubCell"/>
</dbReference>
<dbReference type="GO" id="GO:0004814">
    <property type="term" value="F:arginine-tRNA ligase activity"/>
    <property type="evidence" value="ECO:0007669"/>
    <property type="project" value="UniProtKB-UniRule"/>
</dbReference>
<dbReference type="GO" id="GO:0005524">
    <property type="term" value="F:ATP binding"/>
    <property type="evidence" value="ECO:0007669"/>
    <property type="project" value="UniProtKB-UniRule"/>
</dbReference>
<dbReference type="GO" id="GO:0006420">
    <property type="term" value="P:arginyl-tRNA aminoacylation"/>
    <property type="evidence" value="ECO:0007669"/>
    <property type="project" value="UniProtKB-UniRule"/>
</dbReference>
<dbReference type="CDD" id="cd07956">
    <property type="entry name" value="Anticodon_Ia_Arg"/>
    <property type="match status" value="1"/>
</dbReference>
<dbReference type="CDD" id="cd00671">
    <property type="entry name" value="ArgRS_core"/>
    <property type="match status" value="1"/>
</dbReference>
<dbReference type="FunFam" id="3.40.50.620:FF:000116">
    <property type="entry name" value="Arginine--tRNA ligase"/>
    <property type="match status" value="1"/>
</dbReference>
<dbReference type="FunFam" id="1.10.730.10:FF:000006">
    <property type="entry name" value="Arginyl-tRNA synthetase 2, mitochondrial"/>
    <property type="match status" value="1"/>
</dbReference>
<dbReference type="Gene3D" id="3.30.1360.70">
    <property type="entry name" value="Arginyl tRNA synthetase N-terminal domain"/>
    <property type="match status" value="1"/>
</dbReference>
<dbReference type="Gene3D" id="3.40.50.620">
    <property type="entry name" value="HUPs"/>
    <property type="match status" value="1"/>
</dbReference>
<dbReference type="Gene3D" id="1.10.730.10">
    <property type="entry name" value="Isoleucyl-tRNA Synthetase, Domain 1"/>
    <property type="match status" value="1"/>
</dbReference>
<dbReference type="HAMAP" id="MF_00123">
    <property type="entry name" value="Arg_tRNA_synth"/>
    <property type="match status" value="1"/>
</dbReference>
<dbReference type="InterPro" id="IPR001278">
    <property type="entry name" value="Arg-tRNA-ligase"/>
</dbReference>
<dbReference type="InterPro" id="IPR005148">
    <property type="entry name" value="Arg-tRNA-synth_N"/>
</dbReference>
<dbReference type="InterPro" id="IPR036695">
    <property type="entry name" value="Arg-tRNA-synth_N_sf"/>
</dbReference>
<dbReference type="InterPro" id="IPR035684">
    <property type="entry name" value="ArgRS_core"/>
</dbReference>
<dbReference type="InterPro" id="IPR008909">
    <property type="entry name" value="DALR_anticod-bd"/>
</dbReference>
<dbReference type="InterPro" id="IPR014729">
    <property type="entry name" value="Rossmann-like_a/b/a_fold"/>
</dbReference>
<dbReference type="InterPro" id="IPR009080">
    <property type="entry name" value="tRNAsynth_Ia_anticodon-bd"/>
</dbReference>
<dbReference type="NCBIfam" id="TIGR00456">
    <property type="entry name" value="argS"/>
    <property type="match status" value="1"/>
</dbReference>
<dbReference type="PANTHER" id="PTHR11956:SF5">
    <property type="entry name" value="ARGININE--TRNA LIGASE, CYTOPLASMIC"/>
    <property type="match status" value="1"/>
</dbReference>
<dbReference type="PANTHER" id="PTHR11956">
    <property type="entry name" value="ARGINYL-TRNA SYNTHETASE"/>
    <property type="match status" value="1"/>
</dbReference>
<dbReference type="Pfam" id="PF03485">
    <property type="entry name" value="Arg_tRNA_synt_N"/>
    <property type="match status" value="1"/>
</dbReference>
<dbReference type="Pfam" id="PF05746">
    <property type="entry name" value="DALR_1"/>
    <property type="match status" value="1"/>
</dbReference>
<dbReference type="Pfam" id="PF00750">
    <property type="entry name" value="tRNA-synt_1d"/>
    <property type="match status" value="1"/>
</dbReference>
<dbReference type="PRINTS" id="PR01038">
    <property type="entry name" value="TRNASYNTHARG"/>
</dbReference>
<dbReference type="SMART" id="SM01016">
    <property type="entry name" value="Arg_tRNA_synt_N"/>
    <property type="match status" value="1"/>
</dbReference>
<dbReference type="SMART" id="SM00836">
    <property type="entry name" value="DALR_1"/>
    <property type="match status" value="1"/>
</dbReference>
<dbReference type="SUPFAM" id="SSF47323">
    <property type="entry name" value="Anticodon-binding domain of a subclass of class I aminoacyl-tRNA synthetases"/>
    <property type="match status" value="1"/>
</dbReference>
<dbReference type="SUPFAM" id="SSF55190">
    <property type="entry name" value="Arginyl-tRNA synthetase (ArgRS), N-terminal 'additional' domain"/>
    <property type="match status" value="1"/>
</dbReference>
<dbReference type="SUPFAM" id="SSF52374">
    <property type="entry name" value="Nucleotidylyl transferase"/>
    <property type="match status" value="1"/>
</dbReference>
<gene>
    <name evidence="1" type="primary">argS</name>
    <name type="ordered locus">Spy49_1762</name>
</gene>
<evidence type="ECO:0000255" key="1">
    <source>
        <dbReference type="HAMAP-Rule" id="MF_00123"/>
    </source>
</evidence>
<sequence>MDTKTLIASEIAKVVPELEQDAIFNLLETPKNSDMGDLAFPAFSLAKVLRKAPQMIASELAEQIDESQFEKVVAVGPYINFFLDKVKISSQVLEQVITAGSDYAQQDEGQGRNVAIDMSSPNIAKPFSIGHLRSTVIGDSLANIFAKMGYQPVKINHLGDWGKQFGMLIVAYKKWGDEAAVQAHPIDELLKLYVRINAEAEIDPTVDEEAREWFRKLEDGDKEATELWQWFRDESLLEFNRLYDQLHVTFDSYNGEAFYNDKMDEVLALLEAKNLLVESKGAQVVTLEKYGIAPPPLIKKSDGATLHITRALAPALYRKRTYDFAKSVYVVGNEQAAHFKQLKAVLKEMGYDWSDDMTHVAFGLVTKGGAKLSTRKGNVILLEPTVAEAINRAASQIEAKNPNLADKEAVAHAVGVGAIKFYDLKTDRMNGYDFDLEAMVSFEGETGPYVQYAHARIQSILRKADFTPSATTTYSLADAESWEIIKLIQDFPRIIKRTSDNFEPSIMAKFAINLAQSFNKYYAHTRILDDNSERDNRLVLCYATATVLKEALRLLGVDAPNEM</sequence>
<feature type="chain" id="PRO_1000095414" description="Arginine--tRNA ligase">
    <location>
        <begin position="1"/>
        <end position="563"/>
    </location>
</feature>
<feature type="short sequence motif" description="'HIGH' region">
    <location>
        <begin position="121"/>
        <end position="131"/>
    </location>
</feature>
<reference key="1">
    <citation type="journal article" date="2008" name="J. Bacteriol.">
        <title>Genome sequence of a nephritogenic and highly transformable M49 strain of Streptococcus pyogenes.</title>
        <authorList>
            <person name="McShan W.M."/>
            <person name="Ferretti J.J."/>
            <person name="Karasawa T."/>
            <person name="Suvorov A.N."/>
            <person name="Lin S."/>
            <person name="Qin B."/>
            <person name="Jia H."/>
            <person name="Kenton S."/>
            <person name="Najar F."/>
            <person name="Wu H."/>
            <person name="Scott J."/>
            <person name="Roe B.A."/>
            <person name="Savic D.J."/>
        </authorList>
    </citation>
    <scope>NUCLEOTIDE SEQUENCE [LARGE SCALE GENOMIC DNA]</scope>
    <source>
        <strain>NZ131</strain>
    </source>
</reference>